<protein>
    <recommendedName>
        <fullName evidence="1">Glutathione-regulated potassium-efflux system protein KefB</fullName>
    </recommendedName>
    <alternativeName>
        <fullName evidence="1">K(+)/H(+) antiporter</fullName>
    </alternativeName>
</protein>
<proteinExistence type="inferred from homology"/>
<evidence type="ECO:0000255" key="1">
    <source>
        <dbReference type="HAMAP-Rule" id="MF_01412"/>
    </source>
</evidence>
<evidence type="ECO:0000255" key="2">
    <source>
        <dbReference type="PROSITE-ProRule" id="PRU00543"/>
    </source>
</evidence>
<dbReference type="EMBL" id="BX950851">
    <property type="protein sequence ID" value="CAG76953.1"/>
    <property type="molecule type" value="Genomic_DNA"/>
</dbReference>
<dbReference type="RefSeq" id="WP_011095531.1">
    <property type="nucleotide sequence ID" value="NC_004547.2"/>
</dbReference>
<dbReference type="SMR" id="Q6CZU5"/>
<dbReference type="STRING" id="218491.ECA4056"/>
<dbReference type="GeneID" id="57210720"/>
<dbReference type="KEGG" id="eca:ECA4056"/>
<dbReference type="PATRIC" id="fig|218491.5.peg.4122"/>
<dbReference type="eggNOG" id="COG0475">
    <property type="taxonomic scope" value="Bacteria"/>
</dbReference>
<dbReference type="eggNOG" id="COG1226">
    <property type="taxonomic scope" value="Bacteria"/>
</dbReference>
<dbReference type="HOGENOM" id="CLU_005126_9_3_6"/>
<dbReference type="OrthoDB" id="9781411at2"/>
<dbReference type="Proteomes" id="UP000007966">
    <property type="component" value="Chromosome"/>
</dbReference>
<dbReference type="GO" id="GO:0005886">
    <property type="term" value="C:plasma membrane"/>
    <property type="evidence" value="ECO:0007669"/>
    <property type="project" value="UniProtKB-SubCell"/>
</dbReference>
<dbReference type="GO" id="GO:0015503">
    <property type="term" value="F:glutathione-regulated potassium exporter activity"/>
    <property type="evidence" value="ECO:0007669"/>
    <property type="project" value="UniProtKB-UniRule"/>
</dbReference>
<dbReference type="GO" id="GO:1902600">
    <property type="term" value="P:proton transmembrane transport"/>
    <property type="evidence" value="ECO:0007669"/>
    <property type="project" value="InterPro"/>
</dbReference>
<dbReference type="FunFam" id="1.20.1530.20:FF:000001">
    <property type="entry name" value="Glutathione-regulated potassium-efflux system protein KefB"/>
    <property type="match status" value="1"/>
</dbReference>
<dbReference type="FunFam" id="3.40.50.720:FF:000036">
    <property type="entry name" value="Glutathione-regulated potassium-efflux system protein KefB"/>
    <property type="match status" value="1"/>
</dbReference>
<dbReference type="Gene3D" id="1.20.1530.20">
    <property type="match status" value="1"/>
</dbReference>
<dbReference type="Gene3D" id="3.40.50.720">
    <property type="entry name" value="NAD(P)-binding Rossmann-like Domain"/>
    <property type="match status" value="1"/>
</dbReference>
<dbReference type="HAMAP" id="MF_01412">
    <property type="entry name" value="K_H_efflux_KefB"/>
    <property type="match status" value="1"/>
</dbReference>
<dbReference type="InterPro" id="IPR006153">
    <property type="entry name" value="Cation/H_exchanger_TM"/>
</dbReference>
<dbReference type="InterPro" id="IPR004771">
    <property type="entry name" value="K/H_exchanger"/>
</dbReference>
<dbReference type="InterPro" id="IPR020884">
    <property type="entry name" value="K_H_efflux_KefB"/>
</dbReference>
<dbReference type="InterPro" id="IPR038770">
    <property type="entry name" value="Na+/solute_symporter_sf"/>
</dbReference>
<dbReference type="InterPro" id="IPR036291">
    <property type="entry name" value="NAD(P)-bd_dom_sf"/>
</dbReference>
<dbReference type="InterPro" id="IPR003148">
    <property type="entry name" value="RCK_N"/>
</dbReference>
<dbReference type="NCBIfam" id="TIGR00932">
    <property type="entry name" value="2a37"/>
    <property type="match status" value="1"/>
</dbReference>
<dbReference type="NCBIfam" id="NF002973">
    <property type="entry name" value="PRK03659.1"/>
    <property type="match status" value="1"/>
</dbReference>
<dbReference type="PANTHER" id="PTHR46157">
    <property type="entry name" value="K(+) EFFLUX ANTIPORTER 3, CHLOROPLASTIC"/>
    <property type="match status" value="1"/>
</dbReference>
<dbReference type="PANTHER" id="PTHR46157:SF4">
    <property type="entry name" value="K(+) EFFLUX ANTIPORTER 3, CHLOROPLASTIC"/>
    <property type="match status" value="1"/>
</dbReference>
<dbReference type="Pfam" id="PF00999">
    <property type="entry name" value="Na_H_Exchanger"/>
    <property type="match status" value="1"/>
</dbReference>
<dbReference type="Pfam" id="PF02254">
    <property type="entry name" value="TrkA_N"/>
    <property type="match status" value="1"/>
</dbReference>
<dbReference type="SUPFAM" id="SSF51735">
    <property type="entry name" value="NAD(P)-binding Rossmann-fold domains"/>
    <property type="match status" value="1"/>
</dbReference>
<dbReference type="PROSITE" id="PS51201">
    <property type="entry name" value="RCK_N"/>
    <property type="match status" value="1"/>
</dbReference>
<keyword id="KW-0050">Antiport</keyword>
<keyword id="KW-0997">Cell inner membrane</keyword>
<keyword id="KW-1003">Cell membrane</keyword>
<keyword id="KW-0406">Ion transport</keyword>
<keyword id="KW-0472">Membrane</keyword>
<keyword id="KW-0630">Potassium</keyword>
<keyword id="KW-0633">Potassium transport</keyword>
<keyword id="KW-1185">Reference proteome</keyword>
<keyword id="KW-0812">Transmembrane</keyword>
<keyword id="KW-1133">Transmembrane helix</keyword>
<keyword id="KW-0813">Transport</keyword>
<comment type="function">
    <text evidence="1">Pore-forming subunit of a potassium efflux system that confers protection against electrophiles. Catalyzes K(+)/H(+) antiport.</text>
</comment>
<comment type="subunit">
    <text evidence="1">Interacts with the regulatory subunit KefG.</text>
</comment>
<comment type="subcellular location">
    <subcellularLocation>
        <location evidence="1">Cell inner membrane</location>
        <topology evidence="1">Multi-pass membrane protein</topology>
    </subcellularLocation>
</comment>
<comment type="similarity">
    <text evidence="1">Belongs to the monovalent cation:proton antiporter 2 (CPA2) transporter (TC 2.A.37) family. KefB subfamily.</text>
</comment>
<name>KEFB_PECAS</name>
<gene>
    <name evidence="1" type="primary">kefB</name>
    <name type="ordered locus">ECA4056</name>
</gene>
<organism>
    <name type="scientific">Pectobacterium atrosepticum (strain SCRI 1043 / ATCC BAA-672)</name>
    <name type="common">Erwinia carotovora subsp. atroseptica</name>
    <dbReference type="NCBI Taxonomy" id="218491"/>
    <lineage>
        <taxon>Bacteria</taxon>
        <taxon>Pseudomonadati</taxon>
        <taxon>Pseudomonadota</taxon>
        <taxon>Gammaproteobacteria</taxon>
        <taxon>Enterobacterales</taxon>
        <taxon>Pectobacteriaceae</taxon>
        <taxon>Pectobacterium</taxon>
    </lineage>
</organism>
<feature type="chain" id="PRO_0000196599" description="Glutathione-regulated potassium-efflux system protein KefB">
    <location>
        <begin position="1"/>
        <end position="603"/>
    </location>
</feature>
<feature type="transmembrane region" description="Helical" evidence="1">
    <location>
        <begin position="5"/>
        <end position="25"/>
    </location>
</feature>
<feature type="transmembrane region" description="Helical" evidence="1">
    <location>
        <begin position="29"/>
        <end position="49"/>
    </location>
</feature>
<feature type="transmembrane region" description="Helical" evidence="1">
    <location>
        <begin position="53"/>
        <end position="73"/>
    </location>
</feature>
<feature type="transmembrane region" description="Helical" evidence="1">
    <location>
        <begin position="87"/>
        <end position="107"/>
    </location>
</feature>
<feature type="transmembrane region" description="Helical" evidence="1">
    <location>
        <begin position="115"/>
        <end position="135"/>
    </location>
</feature>
<feature type="transmembrane region" description="Helical" evidence="1">
    <location>
        <begin position="152"/>
        <end position="172"/>
    </location>
</feature>
<feature type="transmembrane region" description="Helical" evidence="1">
    <location>
        <begin position="180"/>
        <end position="202"/>
    </location>
</feature>
<feature type="transmembrane region" description="Helical" evidence="1">
    <location>
        <begin position="207"/>
        <end position="227"/>
    </location>
</feature>
<feature type="transmembrane region" description="Helical" evidence="1">
    <location>
        <begin position="230"/>
        <end position="250"/>
    </location>
</feature>
<feature type="transmembrane region" description="Helical" evidence="1">
    <location>
        <begin position="268"/>
        <end position="288"/>
    </location>
</feature>
<feature type="transmembrane region" description="Helical" evidence="1">
    <location>
        <begin position="291"/>
        <end position="311"/>
    </location>
</feature>
<feature type="transmembrane region" description="Helical" evidence="1">
    <location>
        <begin position="326"/>
        <end position="346"/>
    </location>
</feature>
<feature type="transmembrane region" description="Helical" evidence="1">
    <location>
        <begin position="356"/>
        <end position="376"/>
    </location>
</feature>
<feature type="domain" description="RCK N-terminal" evidence="2">
    <location>
        <begin position="400"/>
        <end position="521"/>
    </location>
</feature>
<accession>Q6CZU5</accession>
<reference key="1">
    <citation type="journal article" date="2004" name="Proc. Natl. Acad. Sci. U.S.A.">
        <title>Genome sequence of the enterobacterial phytopathogen Erwinia carotovora subsp. atroseptica and characterization of virulence factors.</title>
        <authorList>
            <person name="Bell K.S."/>
            <person name="Sebaihia M."/>
            <person name="Pritchard L."/>
            <person name="Holden M.T.G."/>
            <person name="Hyman L.J."/>
            <person name="Holeva M.C."/>
            <person name="Thomson N.R."/>
            <person name="Bentley S.D."/>
            <person name="Churcher L.J.C."/>
            <person name="Mungall K."/>
            <person name="Atkin R."/>
            <person name="Bason N."/>
            <person name="Brooks K."/>
            <person name="Chillingworth T."/>
            <person name="Clark K."/>
            <person name="Doggett J."/>
            <person name="Fraser A."/>
            <person name="Hance Z."/>
            <person name="Hauser H."/>
            <person name="Jagels K."/>
            <person name="Moule S."/>
            <person name="Norbertczak H."/>
            <person name="Ormond D."/>
            <person name="Price C."/>
            <person name="Quail M.A."/>
            <person name="Sanders M."/>
            <person name="Walker D."/>
            <person name="Whitehead S."/>
            <person name="Salmond G.P.C."/>
            <person name="Birch P.R.J."/>
            <person name="Parkhill J."/>
            <person name="Toth I.K."/>
        </authorList>
    </citation>
    <scope>NUCLEOTIDE SEQUENCE [LARGE SCALE GENOMIC DNA]</scope>
    <source>
        <strain>SCRI 1043 / ATCC BAA-672</strain>
    </source>
</reference>
<sequence length="603" mass="66495">MESSALLTAGVLFLFVAVVAVPIAARLGIGAVLGYLIAGIAIGPWGLGFIRDVEAILHFSELGVVFLMFIIGLELNPGKLWTLRRSIFGVGAAQVGLSALILGGALYLTDFSWQSALIGGVGLAMSSTAMALQLMREKGMNRNESGQLGFSVLLFQDLAVIPALALIPILAGVQGDFGDWERIGLKVAAFLGMLIGGRYLVRPLFRFIAASGVREVFTAAALLLVLGSALFMEALGLSMALGTFIAGILLAESEYRHELEIAIEPFKGLLLGLFFISVGMALNLGILYTHIVKIMIAVLVLVAVKGAVLYFLARINRMRRSERLQFAGVLSQGGEFAFVLFSAAASFNVLKGEQLPLLLVTVTLSMMTTPLLMQVIDRVLARRYNVQDVPDEKPYVEDDEPQVIVVGFGRFGQVISRLLMANKMRITVLERDISAVSLMRSYGYKVYYGDATELELLRSAGADKARSIVITCNAPEDTMEIVHLCQQHFPNLEILARARGRVEAHELLQTGVRHFSRETFSSALELGRKTLVTLGMHPHQAMRAQQHFRRLDMRMLRELMPQLTGDVAQISRVKEARRELEDIFQREMLRERRRPSVWDEDDE</sequence>